<feature type="chain" id="PRO_1000083052" description="Co-chaperone protein HscB homolog">
    <location>
        <begin position="1"/>
        <end position="171"/>
    </location>
</feature>
<feature type="domain" description="J" evidence="1">
    <location>
        <begin position="2"/>
        <end position="74"/>
    </location>
</feature>
<comment type="function">
    <text evidence="1">Co-chaperone involved in the maturation of iron-sulfur cluster-containing proteins. Seems to help targeting proteins to be folded toward HscA.</text>
</comment>
<comment type="subunit">
    <text evidence="1">Interacts with HscA and stimulates its ATPase activity.</text>
</comment>
<comment type="similarity">
    <text evidence="1">Belongs to the HscB family.</text>
</comment>
<keyword id="KW-0143">Chaperone</keyword>
<accession>A7MU46</accession>
<organism>
    <name type="scientific">Vibrio campbellii (strain ATCC BAA-1116)</name>
    <dbReference type="NCBI Taxonomy" id="2902295"/>
    <lineage>
        <taxon>Bacteria</taxon>
        <taxon>Pseudomonadati</taxon>
        <taxon>Pseudomonadota</taxon>
        <taxon>Gammaproteobacteria</taxon>
        <taxon>Vibrionales</taxon>
        <taxon>Vibrionaceae</taxon>
        <taxon>Vibrio</taxon>
    </lineage>
</organism>
<name>HSCB_VIBC1</name>
<dbReference type="EMBL" id="CP000789">
    <property type="protein sequence ID" value="ABU70051.1"/>
    <property type="molecule type" value="Genomic_DNA"/>
</dbReference>
<dbReference type="RefSeq" id="WP_005424897.1">
    <property type="nucleotide sequence ID" value="NC_022269.1"/>
</dbReference>
<dbReference type="SMR" id="A7MU46"/>
<dbReference type="GeneID" id="67378318"/>
<dbReference type="KEGG" id="vha:VIBHAR_01058"/>
<dbReference type="PATRIC" id="fig|338187.25.peg.1570"/>
<dbReference type="Proteomes" id="UP000008152">
    <property type="component" value="Chromosome I"/>
</dbReference>
<dbReference type="GO" id="GO:1990230">
    <property type="term" value="C:iron-sulfur cluster transfer complex"/>
    <property type="evidence" value="ECO:0007669"/>
    <property type="project" value="TreeGrafter"/>
</dbReference>
<dbReference type="GO" id="GO:0001671">
    <property type="term" value="F:ATPase activator activity"/>
    <property type="evidence" value="ECO:0007669"/>
    <property type="project" value="InterPro"/>
</dbReference>
<dbReference type="GO" id="GO:0051087">
    <property type="term" value="F:protein-folding chaperone binding"/>
    <property type="evidence" value="ECO:0007669"/>
    <property type="project" value="InterPro"/>
</dbReference>
<dbReference type="GO" id="GO:0044571">
    <property type="term" value="P:[2Fe-2S] cluster assembly"/>
    <property type="evidence" value="ECO:0007669"/>
    <property type="project" value="InterPro"/>
</dbReference>
<dbReference type="GO" id="GO:0051259">
    <property type="term" value="P:protein complex oligomerization"/>
    <property type="evidence" value="ECO:0007669"/>
    <property type="project" value="InterPro"/>
</dbReference>
<dbReference type="GO" id="GO:0006457">
    <property type="term" value="P:protein folding"/>
    <property type="evidence" value="ECO:0007669"/>
    <property type="project" value="UniProtKB-UniRule"/>
</dbReference>
<dbReference type="CDD" id="cd06257">
    <property type="entry name" value="DnaJ"/>
    <property type="match status" value="1"/>
</dbReference>
<dbReference type="Gene3D" id="1.10.287.110">
    <property type="entry name" value="DnaJ domain"/>
    <property type="match status" value="1"/>
</dbReference>
<dbReference type="Gene3D" id="1.20.1280.20">
    <property type="entry name" value="HscB, C-terminal domain"/>
    <property type="match status" value="1"/>
</dbReference>
<dbReference type="HAMAP" id="MF_00682">
    <property type="entry name" value="HscB"/>
    <property type="match status" value="1"/>
</dbReference>
<dbReference type="InterPro" id="IPR001623">
    <property type="entry name" value="DnaJ_domain"/>
</dbReference>
<dbReference type="InterPro" id="IPR004640">
    <property type="entry name" value="HscB"/>
</dbReference>
<dbReference type="InterPro" id="IPR036386">
    <property type="entry name" value="HscB_C_sf"/>
</dbReference>
<dbReference type="InterPro" id="IPR009073">
    <property type="entry name" value="HscB_oligo_C"/>
</dbReference>
<dbReference type="InterPro" id="IPR036869">
    <property type="entry name" value="J_dom_sf"/>
</dbReference>
<dbReference type="NCBIfam" id="TIGR00714">
    <property type="entry name" value="hscB"/>
    <property type="match status" value="1"/>
</dbReference>
<dbReference type="NCBIfam" id="NF003449">
    <property type="entry name" value="PRK05014.1"/>
    <property type="match status" value="1"/>
</dbReference>
<dbReference type="PANTHER" id="PTHR14021">
    <property type="entry name" value="IRON-SULFUR CLUSTER CO-CHAPERONE PROTEIN HSCB"/>
    <property type="match status" value="1"/>
</dbReference>
<dbReference type="PANTHER" id="PTHR14021:SF15">
    <property type="entry name" value="IRON-SULFUR CLUSTER CO-CHAPERONE PROTEIN HSCB"/>
    <property type="match status" value="1"/>
</dbReference>
<dbReference type="Pfam" id="PF00226">
    <property type="entry name" value="DnaJ"/>
    <property type="match status" value="1"/>
</dbReference>
<dbReference type="Pfam" id="PF07743">
    <property type="entry name" value="HSCB_C"/>
    <property type="match status" value="1"/>
</dbReference>
<dbReference type="SMART" id="SM00271">
    <property type="entry name" value="DnaJ"/>
    <property type="match status" value="1"/>
</dbReference>
<dbReference type="SUPFAM" id="SSF46565">
    <property type="entry name" value="Chaperone J-domain"/>
    <property type="match status" value="1"/>
</dbReference>
<dbReference type="SUPFAM" id="SSF47144">
    <property type="entry name" value="HSC20 (HSCB), C-terminal oligomerisation domain"/>
    <property type="match status" value="1"/>
</dbReference>
<dbReference type="PROSITE" id="PS50076">
    <property type="entry name" value="DNAJ_2"/>
    <property type="match status" value="1"/>
</dbReference>
<gene>
    <name evidence="1" type="primary">hscB</name>
    <name type="ordered locus">VIBHAR_01058</name>
</gene>
<reference key="1">
    <citation type="submission" date="2007-08" db="EMBL/GenBank/DDBJ databases">
        <authorList>
            <consortium name="The Vibrio harveyi Genome Sequencing Project"/>
            <person name="Bassler B."/>
            <person name="Clifton S.W."/>
            <person name="Fulton L."/>
            <person name="Delehaunty K."/>
            <person name="Fronick C."/>
            <person name="Harrison M."/>
            <person name="Markivic C."/>
            <person name="Fulton R."/>
            <person name="Tin-Wollam A.-M."/>
            <person name="Shah N."/>
            <person name="Pepin K."/>
            <person name="Nash W."/>
            <person name="Thiruvilangam P."/>
            <person name="Bhonagiri V."/>
            <person name="Waters C."/>
            <person name="Tu K.C."/>
            <person name="Irgon J."/>
            <person name="Wilson R.K."/>
        </authorList>
    </citation>
    <scope>NUCLEOTIDE SEQUENCE [LARGE SCALE GENOMIC DNA]</scope>
    <source>
        <strain>ATCC BAA-1116 / BB120</strain>
    </source>
</reference>
<sequence>MNHFELFGLPSQFQLDGSLLSSQFRELQKRFHPDNFATASERDRLMAVQKAAQINDAYQVLKHPISRAEYILAENGTEIRGEQQTMQDPMFLMEQMELREELEDIADSSDPESALFDFDSKVSKMYKQHLASVEQELDQGLWAEAADRVRKLKFIAKLKNEIELVEDKLLG</sequence>
<protein>
    <recommendedName>
        <fullName evidence="1">Co-chaperone protein HscB homolog</fullName>
    </recommendedName>
</protein>
<evidence type="ECO:0000255" key="1">
    <source>
        <dbReference type="HAMAP-Rule" id="MF_00682"/>
    </source>
</evidence>
<proteinExistence type="inferred from homology"/>